<gene>
    <name type="ordered locus">SAG0271</name>
</gene>
<feature type="chain" id="PRO_0000094998" description="UPF0291 protein SAG0271">
    <location>
        <begin position="1"/>
        <end position="85"/>
    </location>
</feature>
<feature type="region of interest" description="Disordered" evidence="2">
    <location>
        <begin position="58"/>
        <end position="85"/>
    </location>
</feature>
<feature type="compositionally biased region" description="Basic and acidic residues" evidence="2">
    <location>
        <begin position="62"/>
        <end position="85"/>
    </location>
</feature>
<name>Y271_STRA5</name>
<reference key="1">
    <citation type="journal article" date="2002" name="Proc. Natl. Acad. Sci. U.S.A.">
        <title>Complete genome sequence and comparative genomic analysis of an emerging human pathogen, serotype V Streptococcus agalactiae.</title>
        <authorList>
            <person name="Tettelin H."/>
            <person name="Masignani V."/>
            <person name="Cieslewicz M.J."/>
            <person name="Eisen J.A."/>
            <person name="Peterson S.N."/>
            <person name="Wessels M.R."/>
            <person name="Paulsen I.T."/>
            <person name="Nelson K.E."/>
            <person name="Margarit I."/>
            <person name="Read T.D."/>
            <person name="Madoff L.C."/>
            <person name="Wolf A.M."/>
            <person name="Beanan M.J."/>
            <person name="Brinkac L.M."/>
            <person name="Daugherty S.C."/>
            <person name="DeBoy R.T."/>
            <person name="Durkin A.S."/>
            <person name="Kolonay J.F."/>
            <person name="Madupu R."/>
            <person name="Lewis M.R."/>
            <person name="Radune D."/>
            <person name="Fedorova N.B."/>
            <person name="Scanlan D."/>
            <person name="Khouri H.M."/>
            <person name="Mulligan S."/>
            <person name="Carty H.A."/>
            <person name="Cline R.T."/>
            <person name="Van Aken S.E."/>
            <person name="Gill J."/>
            <person name="Scarselli M."/>
            <person name="Mora M."/>
            <person name="Iacobini E.T."/>
            <person name="Brettoni C."/>
            <person name="Galli G."/>
            <person name="Mariani M."/>
            <person name="Vegni F."/>
            <person name="Maione D."/>
            <person name="Rinaudo D."/>
            <person name="Rappuoli R."/>
            <person name="Telford J.L."/>
            <person name="Kasper D.L."/>
            <person name="Grandi G."/>
            <person name="Fraser C.M."/>
        </authorList>
    </citation>
    <scope>NUCLEOTIDE SEQUENCE [LARGE SCALE GENOMIC DNA]</scope>
    <source>
        <strain>ATCC BAA-611 / 2603 V/R</strain>
    </source>
</reference>
<comment type="subcellular location">
    <subcellularLocation>
        <location evidence="1">Cytoplasm</location>
    </subcellularLocation>
</comment>
<comment type="similarity">
    <text evidence="1">Belongs to the UPF0291 family.</text>
</comment>
<organism>
    <name type="scientific">Streptococcus agalactiae serotype V (strain ATCC BAA-611 / 2603 V/R)</name>
    <dbReference type="NCBI Taxonomy" id="208435"/>
    <lineage>
        <taxon>Bacteria</taxon>
        <taxon>Bacillati</taxon>
        <taxon>Bacillota</taxon>
        <taxon>Bacilli</taxon>
        <taxon>Lactobacillales</taxon>
        <taxon>Streptococcaceae</taxon>
        <taxon>Streptococcus</taxon>
    </lineage>
</organism>
<dbReference type="EMBL" id="AE009948">
    <property type="protein sequence ID" value="AAM99178.1"/>
    <property type="molecule type" value="Genomic_DNA"/>
</dbReference>
<dbReference type="RefSeq" id="NP_687306.1">
    <property type="nucleotide sequence ID" value="NC_004116.1"/>
</dbReference>
<dbReference type="RefSeq" id="WP_000371297.1">
    <property type="nucleotide sequence ID" value="NC_004116.1"/>
</dbReference>
<dbReference type="SMR" id="Q8E1T2"/>
<dbReference type="STRING" id="208435.SAG0271"/>
<dbReference type="KEGG" id="sag:SAG0271"/>
<dbReference type="PATRIC" id="fig|208435.3.peg.269"/>
<dbReference type="HOGENOM" id="CLU_173137_0_2_9"/>
<dbReference type="OrthoDB" id="390105at2"/>
<dbReference type="Proteomes" id="UP000000821">
    <property type="component" value="Chromosome"/>
</dbReference>
<dbReference type="GO" id="GO:0005737">
    <property type="term" value="C:cytoplasm"/>
    <property type="evidence" value="ECO:0007669"/>
    <property type="project" value="UniProtKB-SubCell"/>
</dbReference>
<dbReference type="Gene3D" id="1.10.287.540">
    <property type="entry name" value="Helix hairpin bin"/>
    <property type="match status" value="1"/>
</dbReference>
<dbReference type="HAMAP" id="MF_01103">
    <property type="entry name" value="UPF0291"/>
    <property type="match status" value="1"/>
</dbReference>
<dbReference type="InterPro" id="IPR009242">
    <property type="entry name" value="DUF896"/>
</dbReference>
<dbReference type="NCBIfam" id="NF002711">
    <property type="entry name" value="PRK02539.1"/>
    <property type="match status" value="1"/>
</dbReference>
<dbReference type="PANTHER" id="PTHR37300">
    <property type="entry name" value="UPF0291 PROTEIN CBO2609/CLC_2481"/>
    <property type="match status" value="1"/>
</dbReference>
<dbReference type="PANTHER" id="PTHR37300:SF1">
    <property type="entry name" value="UPF0291 PROTEIN YNZC"/>
    <property type="match status" value="1"/>
</dbReference>
<dbReference type="Pfam" id="PF05979">
    <property type="entry name" value="DUF896"/>
    <property type="match status" value="1"/>
</dbReference>
<dbReference type="SUPFAM" id="SSF158221">
    <property type="entry name" value="YnzC-like"/>
    <property type="match status" value="1"/>
</dbReference>
<evidence type="ECO:0000255" key="1">
    <source>
        <dbReference type="HAMAP-Rule" id="MF_01103"/>
    </source>
</evidence>
<evidence type="ECO:0000256" key="2">
    <source>
        <dbReference type="SAM" id="MobiDB-lite"/>
    </source>
</evidence>
<accession>Q8E1T2</accession>
<proteinExistence type="inferred from homology"/>
<sequence>MDPKKIARINELSKKKKTVGLTGEEKVEQAKLREEYIEGFRRSVRHHVEGIKLVDDEGNDVTPEKLRQVQREKGLHGRSLDDPNS</sequence>
<keyword id="KW-0963">Cytoplasm</keyword>
<keyword id="KW-1185">Reference proteome</keyword>
<protein>
    <recommendedName>
        <fullName evidence="1">UPF0291 protein SAG0271</fullName>
    </recommendedName>
</protein>